<comment type="similarity">
    <text evidence="3">Belongs to the YjbT family.</text>
</comment>
<organism>
    <name type="scientific">Escherichia coli O6:H1 (strain CFT073 / ATCC 700928 / UPEC)</name>
    <dbReference type="NCBI Taxonomy" id="199310"/>
    <lineage>
        <taxon>Bacteria</taxon>
        <taxon>Pseudomonadati</taxon>
        <taxon>Pseudomonadota</taxon>
        <taxon>Gammaproteobacteria</taxon>
        <taxon>Enterobacterales</taxon>
        <taxon>Enterobacteriaceae</taxon>
        <taxon>Escherichia</taxon>
    </lineage>
</organism>
<sequence>MKRNLIKVVKMKPYFAALMLSVSVLPAYAGPLGTADKADLPQSNVSSPMMAQSLRQPDLQPISTDRKTECFRLYTPDRKPGVNCVPDGSTGH</sequence>
<accession>Q8FB40</accession>
<protein>
    <recommendedName>
        <fullName>Uncharacterized protein YjbT</fullName>
    </recommendedName>
</protein>
<name>YJBT_ECOL6</name>
<gene>
    <name type="primary">yjbT</name>
    <name type="ordered locus">c4999</name>
</gene>
<keyword id="KW-1185">Reference proteome</keyword>
<keyword id="KW-0732">Signal</keyword>
<reference key="1">
    <citation type="journal article" date="2002" name="Proc. Natl. Acad. Sci. U.S.A.">
        <title>Extensive mosaic structure revealed by the complete genome sequence of uropathogenic Escherichia coli.</title>
        <authorList>
            <person name="Welch R.A."/>
            <person name="Burland V."/>
            <person name="Plunkett G. III"/>
            <person name="Redford P."/>
            <person name="Roesch P."/>
            <person name="Rasko D."/>
            <person name="Buckles E.L."/>
            <person name="Liou S.-R."/>
            <person name="Boutin A."/>
            <person name="Hackett J."/>
            <person name="Stroud D."/>
            <person name="Mayhew G.F."/>
            <person name="Rose D.J."/>
            <person name="Zhou S."/>
            <person name="Schwartz D.C."/>
            <person name="Perna N.T."/>
            <person name="Mobley H.L.T."/>
            <person name="Donnenberg M.S."/>
            <person name="Blattner F.R."/>
        </authorList>
    </citation>
    <scope>NUCLEOTIDE SEQUENCE [LARGE SCALE GENOMIC DNA]</scope>
    <source>
        <strain>CFT073 / ATCC 700928 / UPEC</strain>
    </source>
</reference>
<evidence type="ECO:0000255" key="1"/>
<evidence type="ECO:0000256" key="2">
    <source>
        <dbReference type="SAM" id="MobiDB-lite"/>
    </source>
</evidence>
<evidence type="ECO:0000305" key="3"/>
<proteinExistence type="inferred from homology"/>
<dbReference type="EMBL" id="AE014075">
    <property type="protein sequence ID" value="AAN83425.1"/>
    <property type="molecule type" value="Genomic_DNA"/>
</dbReference>
<dbReference type="RefSeq" id="WP_001295279.1">
    <property type="nucleotide sequence ID" value="NZ_CP051263.1"/>
</dbReference>
<dbReference type="STRING" id="199310.c4999"/>
<dbReference type="KEGG" id="ecc:c4999"/>
<dbReference type="eggNOG" id="ENOG5031KSJ">
    <property type="taxonomic scope" value="Bacteria"/>
</dbReference>
<dbReference type="HOGENOM" id="CLU_2553093_0_0_6"/>
<dbReference type="BioCyc" id="ECOL199310:C4999-MONOMER"/>
<dbReference type="Proteomes" id="UP000001410">
    <property type="component" value="Chromosome"/>
</dbReference>
<dbReference type="InterPro" id="IPR031382">
    <property type="entry name" value="YjbT"/>
</dbReference>
<dbReference type="Pfam" id="PF17089">
    <property type="entry name" value="YjbT"/>
    <property type="match status" value="1"/>
</dbReference>
<feature type="signal peptide" evidence="1">
    <location>
        <begin position="1"/>
        <end position="29"/>
    </location>
</feature>
<feature type="chain" id="PRO_0000311864" description="Uncharacterized protein YjbT">
    <location>
        <begin position="30"/>
        <end position="92"/>
    </location>
</feature>
<feature type="region of interest" description="Disordered" evidence="2">
    <location>
        <begin position="36"/>
        <end position="62"/>
    </location>
</feature>
<feature type="compositionally biased region" description="Polar residues" evidence="2">
    <location>
        <begin position="41"/>
        <end position="55"/>
    </location>
</feature>